<accession>Q7PZK5</accession>
<organism>
    <name type="scientific">Anopheles gambiae</name>
    <name type="common">African malaria mosquito</name>
    <dbReference type="NCBI Taxonomy" id="7165"/>
    <lineage>
        <taxon>Eukaryota</taxon>
        <taxon>Metazoa</taxon>
        <taxon>Ecdysozoa</taxon>
        <taxon>Arthropoda</taxon>
        <taxon>Hexapoda</taxon>
        <taxon>Insecta</taxon>
        <taxon>Pterygota</taxon>
        <taxon>Neoptera</taxon>
        <taxon>Endopterygota</taxon>
        <taxon>Diptera</taxon>
        <taxon>Nematocera</taxon>
        <taxon>Culicoidea</taxon>
        <taxon>Culicidae</taxon>
        <taxon>Anophelinae</taxon>
        <taxon>Anopheles</taxon>
    </lineage>
</organism>
<name>TULP_ANOGA</name>
<dbReference type="EMBL" id="AAAB01008986">
    <property type="protein sequence ID" value="EAA00245.3"/>
    <property type="status" value="ALT_INIT"/>
    <property type="molecule type" value="Genomic_DNA"/>
</dbReference>
<dbReference type="RefSeq" id="XP_320575.3">
    <property type="nucleotide sequence ID" value="XM_320575.3"/>
</dbReference>
<dbReference type="SMR" id="Q7PZK5"/>
<dbReference type="FunCoup" id="Q7PZK5">
    <property type="interactions" value="222"/>
</dbReference>
<dbReference type="STRING" id="7165.Q7PZK5"/>
<dbReference type="PaxDb" id="7165-AGAP011959-PA"/>
<dbReference type="VEuPathDB" id="VectorBase:AGAMI1_007338"/>
<dbReference type="VEuPathDB" id="VectorBase:AGAP011959"/>
<dbReference type="eggNOG" id="KOG2502">
    <property type="taxonomic scope" value="Eukaryota"/>
</dbReference>
<dbReference type="HOGENOM" id="CLU_028236_1_1_1"/>
<dbReference type="InParanoid" id="Q7PZK5"/>
<dbReference type="OMA" id="GYDGPMQ"/>
<dbReference type="Proteomes" id="UP000007062">
    <property type="component" value="Chromosome 3L"/>
</dbReference>
<dbReference type="GO" id="GO:0005929">
    <property type="term" value="C:cilium"/>
    <property type="evidence" value="ECO:0000318"/>
    <property type="project" value="GO_Central"/>
</dbReference>
<dbReference type="GO" id="GO:0005737">
    <property type="term" value="C:cytoplasm"/>
    <property type="evidence" value="ECO:0000250"/>
    <property type="project" value="UniProtKB"/>
</dbReference>
<dbReference type="GO" id="GO:0005634">
    <property type="term" value="C:nucleus"/>
    <property type="evidence" value="ECO:0000250"/>
    <property type="project" value="UniProtKB"/>
</dbReference>
<dbReference type="GO" id="GO:0061512">
    <property type="term" value="P:protein localization to cilium"/>
    <property type="evidence" value="ECO:0000318"/>
    <property type="project" value="GO_Central"/>
</dbReference>
<dbReference type="FunFam" id="3.20.90.10:FF:000001">
    <property type="entry name" value="Tubby-like protein"/>
    <property type="match status" value="1"/>
</dbReference>
<dbReference type="Gene3D" id="3.20.90.10">
    <property type="entry name" value="Tubby Protein, Chain A"/>
    <property type="match status" value="1"/>
</dbReference>
<dbReference type="InterPro" id="IPR025659">
    <property type="entry name" value="Tubby-like_C"/>
</dbReference>
<dbReference type="InterPro" id="IPR000007">
    <property type="entry name" value="Tubby_C"/>
</dbReference>
<dbReference type="InterPro" id="IPR018066">
    <property type="entry name" value="Tubby_C_CS"/>
</dbReference>
<dbReference type="PANTHER" id="PTHR16517:SF7">
    <property type="entry name" value="PROTEIN KING TUBBY"/>
    <property type="match status" value="1"/>
</dbReference>
<dbReference type="PANTHER" id="PTHR16517">
    <property type="entry name" value="TUBBY-RELATED"/>
    <property type="match status" value="1"/>
</dbReference>
<dbReference type="Pfam" id="PF01167">
    <property type="entry name" value="Tub"/>
    <property type="match status" value="1"/>
</dbReference>
<dbReference type="PRINTS" id="PR01573">
    <property type="entry name" value="SUPERTUBBY"/>
</dbReference>
<dbReference type="SUPFAM" id="SSF54518">
    <property type="entry name" value="Tubby C-terminal domain-like"/>
    <property type="match status" value="1"/>
</dbReference>
<dbReference type="PROSITE" id="PS01200">
    <property type="entry name" value="TUB_1"/>
    <property type="match status" value="1"/>
</dbReference>
<dbReference type="PROSITE" id="PS01201">
    <property type="entry name" value="TUB_2"/>
    <property type="match status" value="1"/>
</dbReference>
<protein>
    <recommendedName>
        <fullName evidence="1">Protein king tubby</fullName>
    </recommendedName>
</protein>
<reference evidence="5" key="1">
    <citation type="journal article" date="2002" name="Science">
        <title>The genome sequence of the malaria mosquito Anopheles gambiae.</title>
        <authorList>
            <person name="Holt R.A."/>
            <person name="Subramanian G.M."/>
            <person name="Halpern A."/>
            <person name="Sutton G.G."/>
            <person name="Charlab R."/>
            <person name="Nusskern D.R."/>
            <person name="Wincker P."/>
            <person name="Clark A.G."/>
            <person name="Ribeiro J.M.C."/>
            <person name="Wides R."/>
            <person name="Salzberg S.L."/>
            <person name="Loftus B.J."/>
            <person name="Yandell M.D."/>
            <person name="Majoros W.H."/>
            <person name="Rusch D.B."/>
            <person name="Lai Z."/>
            <person name="Kraft C.L."/>
            <person name="Abril J.F."/>
            <person name="Anthouard V."/>
            <person name="Arensburger P."/>
            <person name="Atkinson P.W."/>
            <person name="Baden H."/>
            <person name="de Berardinis V."/>
            <person name="Baldwin D."/>
            <person name="Benes V."/>
            <person name="Biedler J."/>
            <person name="Blass C."/>
            <person name="Bolanos R."/>
            <person name="Boscus D."/>
            <person name="Barnstead M."/>
            <person name="Cai S."/>
            <person name="Center A."/>
            <person name="Chaturverdi K."/>
            <person name="Christophides G.K."/>
            <person name="Chrystal M.A.M."/>
            <person name="Clamp M."/>
            <person name="Cravchik A."/>
            <person name="Curwen V."/>
            <person name="Dana A."/>
            <person name="Delcher A."/>
            <person name="Dew I."/>
            <person name="Evans C.A."/>
            <person name="Flanigan M."/>
            <person name="Grundschober-Freimoser A."/>
            <person name="Friedli L."/>
            <person name="Gu Z."/>
            <person name="Guan P."/>
            <person name="Guigo R."/>
            <person name="Hillenmeyer M.E."/>
            <person name="Hladun S.L."/>
            <person name="Hogan J.R."/>
            <person name="Hong Y.S."/>
            <person name="Hoover J."/>
            <person name="Jaillon O."/>
            <person name="Ke Z."/>
            <person name="Kodira C.D."/>
            <person name="Kokoza E."/>
            <person name="Koutsos A."/>
            <person name="Letunic I."/>
            <person name="Levitsky A.A."/>
            <person name="Liang Y."/>
            <person name="Lin J.-J."/>
            <person name="Lobo N.F."/>
            <person name="Lopez J.R."/>
            <person name="Malek J.A."/>
            <person name="McIntosh T.C."/>
            <person name="Meister S."/>
            <person name="Miller J.R."/>
            <person name="Mobarry C."/>
            <person name="Mongin E."/>
            <person name="Murphy S.D."/>
            <person name="O'Brochta D.A."/>
            <person name="Pfannkoch C."/>
            <person name="Qi R."/>
            <person name="Regier M.A."/>
            <person name="Remington K."/>
            <person name="Shao H."/>
            <person name="Sharakhova M.V."/>
            <person name="Sitter C.D."/>
            <person name="Shetty J."/>
            <person name="Smith T.J."/>
            <person name="Strong R."/>
            <person name="Sun J."/>
            <person name="Thomasova D."/>
            <person name="Ton L.Q."/>
            <person name="Topalis P."/>
            <person name="Tu Z.J."/>
            <person name="Unger M.F."/>
            <person name="Walenz B."/>
            <person name="Wang A.H."/>
            <person name="Wang J."/>
            <person name="Wang M."/>
            <person name="Wang X."/>
            <person name="Woodford K.J."/>
            <person name="Wortman J.R."/>
            <person name="Wu M."/>
            <person name="Yao A."/>
            <person name="Zdobnov E.M."/>
            <person name="Zhang H."/>
            <person name="Zhao Q."/>
            <person name="Zhao S."/>
            <person name="Zhu S.C."/>
            <person name="Zhimulev I."/>
            <person name="Coluzzi M."/>
            <person name="della Torre A."/>
            <person name="Roth C.W."/>
            <person name="Louis C."/>
            <person name="Kalush F."/>
            <person name="Mural R.J."/>
            <person name="Myers E.W."/>
            <person name="Adams M.D."/>
            <person name="Smith H.O."/>
            <person name="Broder S."/>
            <person name="Gardner M.J."/>
            <person name="Fraser C.M."/>
            <person name="Birney E."/>
            <person name="Bork P."/>
            <person name="Brey P.T."/>
            <person name="Venter J.C."/>
            <person name="Weissenbach J."/>
            <person name="Kafatos F.C."/>
            <person name="Collins F.H."/>
            <person name="Hoffman S.L."/>
        </authorList>
    </citation>
    <scope>NUCLEOTIDE SEQUENCE [LARGE SCALE GENOMIC DNA]</scope>
    <source>
        <strain>PEST</strain>
    </source>
</reference>
<feature type="chain" id="PRO_0000400834" description="Protein king tubby">
    <location>
        <begin position="1"/>
        <end position="447"/>
    </location>
</feature>
<feature type="region of interest" description="Disordered" evidence="3">
    <location>
        <begin position="71"/>
        <end position="196"/>
    </location>
</feature>
<feature type="compositionally biased region" description="Low complexity" evidence="3">
    <location>
        <begin position="71"/>
        <end position="92"/>
    </location>
</feature>
<feature type="compositionally biased region" description="Low complexity" evidence="3">
    <location>
        <begin position="157"/>
        <end position="169"/>
    </location>
</feature>
<proteinExistence type="inferred from homology"/>
<comment type="subcellular location">
    <subcellularLocation>
        <location evidence="1">Cytoplasm</location>
    </subcellularLocation>
    <subcellularLocation>
        <location evidence="1">Nucleus</location>
    </subcellularLocation>
</comment>
<comment type="similarity">
    <text evidence="2">Belongs to the TUB family.</text>
</comment>
<comment type="sequence caution" evidence="4">
    <conflict type="erroneous initiation">
        <sequence resource="EMBL-CDS" id="EAA00245"/>
    </conflict>
    <text>Extended N-terminus.</text>
</comment>
<sequence length="447" mass="48648">MEAYIRQKRATPGMVQASDLQLVRPMSGVNRNGREVHAYDGPMQFMMSPTNPDQIMPTSPVGPVPTVAVGGTGPNVTATSITTTPTSPYSDSTMEKLTPSSQDSEDEESTPVDVLPLPASTKSPANGGAGGAILYDRPTVDGHHLLSHSAPISPALNNNNHTHHTNSSSGNVKSSEDSGTPPSGGGGGAPDTEGDVIGPIEQWVTQPAAQGVLYKCRITRDRKGMDRGLFPIYYLHLERDYGKKLFCLAGRKRKKSKTSNYIISCDPTDLSRQADGFVGKLRSNVFGTTFFVYDSGTKNDAAAPRLDLAVVIYDTNILGFKGPRNMTVLLPGMTEDDQRVQISSVDDQQGLLDCWKSKNMDNVVELHNKTPIWNDETQSYVLNFHGRVTQASVKNFQLVHDSDPEYIVMQFGRTADDIFTMDFRYPLCAFQAFAIALSSFDGKLACE</sequence>
<gene>
    <name evidence="1" type="primary">king-tubby</name>
    <name type="ORF">AGAP011959</name>
</gene>
<evidence type="ECO:0000250" key="1">
    <source>
        <dbReference type="UniProtKB" id="Q86PC9"/>
    </source>
</evidence>
<evidence type="ECO:0000255" key="2"/>
<evidence type="ECO:0000256" key="3">
    <source>
        <dbReference type="SAM" id="MobiDB-lite"/>
    </source>
</evidence>
<evidence type="ECO:0000305" key="4"/>
<evidence type="ECO:0000312" key="5">
    <source>
        <dbReference type="EMBL" id="EAA00245.3"/>
    </source>
</evidence>
<keyword id="KW-0963">Cytoplasm</keyword>
<keyword id="KW-0539">Nucleus</keyword>
<keyword id="KW-1185">Reference proteome</keyword>